<sequence length="534" mass="59141">MKKKIVHPIVLAILDGWGHTNIQQGNAIKIAKTPTIDSLIQAYPSTLLAASGQEVGLPKGQMGNSEVGHTTIGGGRVIQQELVKIGNSIVDNSFFNNLELNEACEYANNNKASLHLIGLCSNGGVHSHIDHLLALIDLADSKQVTNLYLHLITDGRDTSSNSAKYFIKIVADHIEHKQFATISTISGRYYAMDRDFRWSRTQAAYNILTSNNSIKLNASVNYGDLIDHYYNKGISDEFIPPSRINLGSIKDNDAIVFFNFRPDRMRQIVQAFVQKPFNCFATKPLYNLRVVTFTNYDTSLNTTIAFHPHILNNFLGEVLYKYGLKQFRVSETEKYAHVTYFFNGGAEEPFPGEDRELVSSPDVTTYDLSPDMSAELVTQKSISAIKKAIYSCIVINYANADMLGHTGKLKETIQSIETVDRCITELLDAVSKLNGTLIITADHGNAECMFTDEGNPCTAHTTNLVPLILIEGEQEAISGHGGQVKLRNNGSLADIAPTILDILHLKKPPEMTGKSLIINSRYETRNIEKTSIEL</sequence>
<geneLocation type="chloroplast"/>
<name>GPMI_PYRYE</name>
<dbReference type="EC" id="5.4.2.12" evidence="1"/>
<dbReference type="EMBL" id="AP006715">
    <property type="protein sequence ID" value="BAE92503.1"/>
    <property type="molecule type" value="Genomic_DNA"/>
</dbReference>
<dbReference type="RefSeq" id="YP_537060.1">
    <property type="nucleotide sequence ID" value="NC_007932.1"/>
</dbReference>
<dbReference type="SMR" id="Q1XDA8"/>
<dbReference type="GeneID" id="3978944"/>
<dbReference type="UniPathway" id="UPA00109">
    <property type="reaction ID" value="UER00186"/>
</dbReference>
<dbReference type="GO" id="GO:0009507">
    <property type="term" value="C:chloroplast"/>
    <property type="evidence" value="ECO:0007669"/>
    <property type="project" value="UniProtKB-SubCell"/>
</dbReference>
<dbReference type="GO" id="GO:0005829">
    <property type="term" value="C:cytosol"/>
    <property type="evidence" value="ECO:0007669"/>
    <property type="project" value="TreeGrafter"/>
</dbReference>
<dbReference type="GO" id="GO:0030145">
    <property type="term" value="F:manganese ion binding"/>
    <property type="evidence" value="ECO:0007669"/>
    <property type="project" value="UniProtKB-UniRule"/>
</dbReference>
<dbReference type="GO" id="GO:0004619">
    <property type="term" value="F:phosphoglycerate mutase activity"/>
    <property type="evidence" value="ECO:0007669"/>
    <property type="project" value="UniProtKB-EC"/>
</dbReference>
<dbReference type="GO" id="GO:0006007">
    <property type="term" value="P:glucose catabolic process"/>
    <property type="evidence" value="ECO:0007669"/>
    <property type="project" value="InterPro"/>
</dbReference>
<dbReference type="GO" id="GO:0006096">
    <property type="term" value="P:glycolytic process"/>
    <property type="evidence" value="ECO:0007669"/>
    <property type="project" value="UniProtKB-UniRule"/>
</dbReference>
<dbReference type="CDD" id="cd16010">
    <property type="entry name" value="iPGM"/>
    <property type="match status" value="1"/>
</dbReference>
<dbReference type="FunFam" id="3.40.1450.10:FF:000002">
    <property type="entry name" value="2,3-bisphosphoglycerate-independent phosphoglycerate mutase"/>
    <property type="match status" value="1"/>
</dbReference>
<dbReference type="Gene3D" id="3.40.720.10">
    <property type="entry name" value="Alkaline Phosphatase, subunit A"/>
    <property type="match status" value="1"/>
</dbReference>
<dbReference type="Gene3D" id="3.40.1450.10">
    <property type="entry name" value="BPG-independent phosphoglycerate mutase, domain B"/>
    <property type="match status" value="1"/>
</dbReference>
<dbReference type="HAMAP" id="MF_01038">
    <property type="entry name" value="GpmI"/>
    <property type="match status" value="1"/>
</dbReference>
<dbReference type="InterPro" id="IPR017850">
    <property type="entry name" value="Alkaline_phosphatase_core_sf"/>
</dbReference>
<dbReference type="InterPro" id="IPR011258">
    <property type="entry name" value="BPG-indep_PGM_N"/>
</dbReference>
<dbReference type="InterPro" id="IPR006124">
    <property type="entry name" value="Metalloenzyme"/>
</dbReference>
<dbReference type="InterPro" id="IPR036646">
    <property type="entry name" value="PGAM_B_sf"/>
</dbReference>
<dbReference type="InterPro" id="IPR005995">
    <property type="entry name" value="Pgm_bpd_ind"/>
</dbReference>
<dbReference type="NCBIfam" id="TIGR01307">
    <property type="entry name" value="pgm_bpd_ind"/>
    <property type="match status" value="1"/>
</dbReference>
<dbReference type="PANTHER" id="PTHR31637">
    <property type="entry name" value="2,3-BISPHOSPHOGLYCERATE-INDEPENDENT PHOSPHOGLYCERATE MUTASE"/>
    <property type="match status" value="1"/>
</dbReference>
<dbReference type="PANTHER" id="PTHR31637:SF0">
    <property type="entry name" value="2,3-BISPHOSPHOGLYCERATE-INDEPENDENT PHOSPHOGLYCERATE MUTASE"/>
    <property type="match status" value="1"/>
</dbReference>
<dbReference type="Pfam" id="PF06415">
    <property type="entry name" value="iPGM_N"/>
    <property type="match status" value="1"/>
</dbReference>
<dbReference type="Pfam" id="PF01676">
    <property type="entry name" value="Metalloenzyme"/>
    <property type="match status" value="1"/>
</dbReference>
<dbReference type="PIRSF" id="PIRSF001492">
    <property type="entry name" value="IPGAM"/>
    <property type="match status" value="1"/>
</dbReference>
<dbReference type="SUPFAM" id="SSF64158">
    <property type="entry name" value="2,3-Bisphosphoglycerate-independent phosphoglycerate mutase, substrate-binding domain"/>
    <property type="match status" value="1"/>
</dbReference>
<dbReference type="SUPFAM" id="SSF53649">
    <property type="entry name" value="Alkaline phosphatase-like"/>
    <property type="match status" value="1"/>
</dbReference>
<gene>
    <name evidence="1" type="primary">gpmI</name>
    <name type="synonym">pgmA</name>
</gene>
<evidence type="ECO:0000255" key="1">
    <source>
        <dbReference type="HAMAP-Rule" id="MF_01038"/>
    </source>
</evidence>
<comment type="function">
    <text evidence="1">Catalyzes the interconversion of 2-phosphoglycerate and 3-phosphoglycerate.</text>
</comment>
<comment type="catalytic activity">
    <reaction evidence="1">
        <text>(2R)-2-phosphoglycerate = (2R)-3-phosphoglycerate</text>
        <dbReference type="Rhea" id="RHEA:15901"/>
        <dbReference type="ChEBI" id="CHEBI:58272"/>
        <dbReference type="ChEBI" id="CHEBI:58289"/>
        <dbReference type="EC" id="5.4.2.12"/>
    </reaction>
</comment>
<comment type="cofactor">
    <cofactor evidence="1">
        <name>Mn(2+)</name>
        <dbReference type="ChEBI" id="CHEBI:29035"/>
    </cofactor>
    <text evidence="1">Binds 2 manganese ions per subunit.</text>
</comment>
<comment type="pathway">
    <text evidence="1">Carbohydrate degradation; glycolysis; pyruvate from D-glyceraldehyde 3-phosphate: step 3/5.</text>
</comment>
<comment type="subcellular location">
    <subcellularLocation>
        <location>Plastid</location>
        <location>Chloroplast</location>
    </subcellularLocation>
</comment>
<comment type="similarity">
    <text evidence="1">Belongs to the BPG-independent phosphoglycerate mutase family.</text>
</comment>
<protein>
    <recommendedName>
        <fullName evidence="1">2,3-bisphosphoglycerate-independent phosphoglycerate mutase</fullName>
        <shortName evidence="1">BPG-independent PGAM</shortName>
        <shortName evidence="1">Phosphoglyceromutase</shortName>
        <shortName evidence="1">iPGM</shortName>
        <ecNumber evidence="1">5.4.2.12</ecNumber>
    </recommendedName>
</protein>
<reference key="1">
    <citation type="submission" date="2003-11" db="EMBL/GenBank/DDBJ databases">
        <title>Whole genome sequence of Porphyra yezoensis chloroplast.</title>
        <authorList>
            <person name="Kunimoto M."/>
            <person name="Morishima K."/>
            <person name="Yoshikawa M."/>
            <person name="Fukuda S."/>
            <person name="Kobayashi T."/>
            <person name="Kobayashi M."/>
            <person name="Okazaki T."/>
            <person name="Ohara I."/>
            <person name="Nakayama I."/>
        </authorList>
    </citation>
    <scope>NUCLEOTIDE SEQUENCE [LARGE SCALE GENOMIC DNA]</scope>
    <source>
        <strain>U-51</strain>
    </source>
</reference>
<proteinExistence type="inferred from homology"/>
<keyword id="KW-0150">Chloroplast</keyword>
<keyword id="KW-0324">Glycolysis</keyword>
<keyword id="KW-0413">Isomerase</keyword>
<keyword id="KW-0464">Manganese</keyword>
<keyword id="KW-0479">Metal-binding</keyword>
<keyword id="KW-0934">Plastid</keyword>
<accession>Q1XDA8</accession>
<feature type="chain" id="PRO_0000275375" description="2,3-bisphosphoglycerate-independent phosphoglycerate mutase">
    <location>
        <begin position="1"/>
        <end position="534"/>
    </location>
</feature>
<feature type="active site" description="Phosphoserine intermediate" evidence="1">
    <location>
        <position position="65"/>
    </location>
</feature>
<feature type="binding site" evidence="1">
    <location>
        <position position="15"/>
    </location>
    <ligand>
        <name>Mn(2+)</name>
        <dbReference type="ChEBI" id="CHEBI:29035"/>
        <label>2</label>
    </ligand>
</feature>
<feature type="binding site" evidence="1">
    <location>
        <position position="65"/>
    </location>
    <ligand>
        <name>Mn(2+)</name>
        <dbReference type="ChEBI" id="CHEBI:29035"/>
        <label>2</label>
    </ligand>
</feature>
<feature type="binding site" evidence="1">
    <location>
        <position position="126"/>
    </location>
    <ligand>
        <name>substrate</name>
    </ligand>
</feature>
<feature type="binding site" evidence="1">
    <location>
        <begin position="156"/>
        <end position="157"/>
    </location>
    <ligand>
        <name>substrate</name>
    </ligand>
</feature>
<feature type="binding site" evidence="1">
    <location>
        <position position="188"/>
    </location>
    <ligand>
        <name>substrate</name>
    </ligand>
</feature>
<feature type="binding site" evidence="1">
    <location>
        <position position="194"/>
    </location>
    <ligand>
        <name>substrate</name>
    </ligand>
</feature>
<feature type="binding site" evidence="1">
    <location>
        <begin position="261"/>
        <end position="264"/>
    </location>
    <ligand>
        <name>substrate</name>
    </ligand>
</feature>
<feature type="binding site" evidence="1">
    <location>
        <position position="334"/>
    </location>
    <ligand>
        <name>substrate</name>
    </ligand>
</feature>
<feature type="binding site" evidence="1">
    <location>
        <position position="401"/>
    </location>
    <ligand>
        <name>Mn(2+)</name>
        <dbReference type="ChEBI" id="CHEBI:29035"/>
        <label>1</label>
    </ligand>
</feature>
<feature type="binding site" evidence="1">
    <location>
        <position position="405"/>
    </location>
    <ligand>
        <name>Mn(2+)</name>
        <dbReference type="ChEBI" id="CHEBI:29035"/>
        <label>1</label>
    </ligand>
</feature>
<feature type="binding site" evidence="1">
    <location>
        <position position="442"/>
    </location>
    <ligand>
        <name>Mn(2+)</name>
        <dbReference type="ChEBI" id="CHEBI:29035"/>
        <label>2</label>
    </ligand>
</feature>
<feature type="binding site" evidence="1">
    <location>
        <position position="443"/>
    </location>
    <ligand>
        <name>Mn(2+)</name>
        <dbReference type="ChEBI" id="CHEBI:29035"/>
        <label>2</label>
    </ligand>
</feature>
<feature type="binding site" evidence="1">
    <location>
        <position position="460"/>
    </location>
    <ligand>
        <name>Mn(2+)</name>
        <dbReference type="ChEBI" id="CHEBI:29035"/>
        <label>1</label>
    </ligand>
</feature>
<organism>
    <name type="scientific">Pyropia yezoensis</name>
    <name type="common">Susabi-nori</name>
    <name type="synonym">Porphyra yezoensis</name>
    <dbReference type="NCBI Taxonomy" id="2788"/>
    <lineage>
        <taxon>Eukaryota</taxon>
        <taxon>Rhodophyta</taxon>
        <taxon>Bangiophyceae</taxon>
        <taxon>Bangiales</taxon>
        <taxon>Bangiaceae</taxon>
        <taxon>Pyropia</taxon>
    </lineage>
</organism>